<sequence>MDAKIMITSPTTWPSPAKLNLFLYINGRTDNGYHELQTLFQFLDHGDQLTITVNDSGHITLTPDIVDLPVEQNLIWKAANALKKKTGCTLGANIHLNKILPMGGGIGGGSSNAATALVALNFLWQLGLSDDELADIGLKLGADVPVFVRGHAAFAEGVGEKLTPAQPEEKWYLVVRPDVHIATVDIFTHPDLTRNTPKRSLETLLDSEYGNDCEKIVRMIHPKVDKQLSWLLQYAPSRLTGTGSCVFAEFNSRSEAESILAQLSDNVSAFVAQGRNISPLKETLADYLSAQNRPI</sequence>
<protein>
    <recommendedName>
        <fullName evidence="1">4-diphosphocytidyl-2-C-methyl-D-erythritol kinase</fullName>
        <shortName evidence="1">CMK</shortName>
        <ecNumber evidence="1">2.7.1.148</ecNumber>
    </recommendedName>
    <alternativeName>
        <fullName evidence="1">4-(cytidine-5'-diphospho)-2-C-methyl-D-erythritol kinase</fullName>
    </alternativeName>
</protein>
<proteinExistence type="inferred from homology"/>
<evidence type="ECO:0000255" key="1">
    <source>
        <dbReference type="HAMAP-Rule" id="MF_00061"/>
    </source>
</evidence>
<accession>Q7MMZ0</accession>
<gene>
    <name evidence="1" type="primary">ispE</name>
    <name type="ordered locus">VV0928</name>
</gene>
<reference key="1">
    <citation type="journal article" date="2003" name="Genome Res.">
        <title>Comparative genome analysis of Vibrio vulnificus, a marine pathogen.</title>
        <authorList>
            <person name="Chen C.-Y."/>
            <person name="Wu K.-M."/>
            <person name="Chang Y.-C."/>
            <person name="Chang C.-H."/>
            <person name="Tsai H.-C."/>
            <person name="Liao T.-L."/>
            <person name="Liu Y.-M."/>
            <person name="Chen H.-J."/>
            <person name="Shen A.B.-T."/>
            <person name="Li J.-C."/>
            <person name="Su T.-L."/>
            <person name="Shao C.-P."/>
            <person name="Lee C.-T."/>
            <person name="Hor L.-I."/>
            <person name="Tsai S.-F."/>
        </authorList>
    </citation>
    <scope>NUCLEOTIDE SEQUENCE [LARGE SCALE GENOMIC DNA]</scope>
    <source>
        <strain>YJ016</strain>
    </source>
</reference>
<dbReference type="EC" id="2.7.1.148" evidence="1"/>
<dbReference type="EMBL" id="BA000037">
    <property type="protein sequence ID" value="BAC93691.1"/>
    <property type="molecule type" value="Genomic_DNA"/>
</dbReference>
<dbReference type="RefSeq" id="WP_011149725.1">
    <property type="nucleotide sequence ID" value="NC_005139.1"/>
</dbReference>
<dbReference type="SMR" id="Q7MMZ0"/>
<dbReference type="STRING" id="672.VV93_v1c08590"/>
<dbReference type="KEGG" id="vvy:VV0928"/>
<dbReference type="PATRIC" id="fig|196600.6.peg.928"/>
<dbReference type="eggNOG" id="COG1947">
    <property type="taxonomic scope" value="Bacteria"/>
</dbReference>
<dbReference type="HOGENOM" id="CLU_053057_3_0_6"/>
<dbReference type="UniPathway" id="UPA00056">
    <property type="reaction ID" value="UER00094"/>
</dbReference>
<dbReference type="Proteomes" id="UP000002675">
    <property type="component" value="Chromosome I"/>
</dbReference>
<dbReference type="GO" id="GO:0050515">
    <property type="term" value="F:4-(cytidine 5'-diphospho)-2-C-methyl-D-erythritol kinase activity"/>
    <property type="evidence" value="ECO:0007669"/>
    <property type="project" value="UniProtKB-UniRule"/>
</dbReference>
<dbReference type="GO" id="GO:0005524">
    <property type="term" value="F:ATP binding"/>
    <property type="evidence" value="ECO:0007669"/>
    <property type="project" value="UniProtKB-UniRule"/>
</dbReference>
<dbReference type="GO" id="GO:0019288">
    <property type="term" value="P:isopentenyl diphosphate biosynthetic process, methylerythritol 4-phosphate pathway"/>
    <property type="evidence" value="ECO:0007669"/>
    <property type="project" value="UniProtKB-UniRule"/>
</dbReference>
<dbReference type="GO" id="GO:0016114">
    <property type="term" value="P:terpenoid biosynthetic process"/>
    <property type="evidence" value="ECO:0007669"/>
    <property type="project" value="InterPro"/>
</dbReference>
<dbReference type="FunFam" id="3.30.230.10:FF:000022">
    <property type="entry name" value="4-diphosphocytidyl-2-C-methyl-D-erythritol kinase"/>
    <property type="match status" value="1"/>
</dbReference>
<dbReference type="FunFam" id="3.30.70.890:FF:000004">
    <property type="entry name" value="4-diphosphocytidyl-2-C-methyl-D-erythritol kinase"/>
    <property type="match status" value="1"/>
</dbReference>
<dbReference type="Gene3D" id="3.30.230.10">
    <property type="match status" value="1"/>
</dbReference>
<dbReference type="Gene3D" id="3.30.70.890">
    <property type="entry name" value="GHMP kinase, C-terminal domain"/>
    <property type="match status" value="1"/>
</dbReference>
<dbReference type="HAMAP" id="MF_00061">
    <property type="entry name" value="IspE"/>
    <property type="match status" value="1"/>
</dbReference>
<dbReference type="InterPro" id="IPR013750">
    <property type="entry name" value="GHMP_kinase_C_dom"/>
</dbReference>
<dbReference type="InterPro" id="IPR036554">
    <property type="entry name" value="GHMP_kinase_C_sf"/>
</dbReference>
<dbReference type="InterPro" id="IPR006204">
    <property type="entry name" value="GHMP_kinase_N_dom"/>
</dbReference>
<dbReference type="InterPro" id="IPR004424">
    <property type="entry name" value="IspE"/>
</dbReference>
<dbReference type="InterPro" id="IPR020568">
    <property type="entry name" value="Ribosomal_Su5_D2-typ_SF"/>
</dbReference>
<dbReference type="InterPro" id="IPR014721">
    <property type="entry name" value="Ribsml_uS5_D2-typ_fold_subgr"/>
</dbReference>
<dbReference type="NCBIfam" id="TIGR00154">
    <property type="entry name" value="ispE"/>
    <property type="match status" value="1"/>
</dbReference>
<dbReference type="PANTHER" id="PTHR43527">
    <property type="entry name" value="4-DIPHOSPHOCYTIDYL-2-C-METHYL-D-ERYTHRITOL KINASE, CHLOROPLASTIC"/>
    <property type="match status" value="1"/>
</dbReference>
<dbReference type="PANTHER" id="PTHR43527:SF2">
    <property type="entry name" value="4-DIPHOSPHOCYTIDYL-2-C-METHYL-D-ERYTHRITOL KINASE, CHLOROPLASTIC"/>
    <property type="match status" value="1"/>
</dbReference>
<dbReference type="Pfam" id="PF08544">
    <property type="entry name" value="GHMP_kinases_C"/>
    <property type="match status" value="1"/>
</dbReference>
<dbReference type="Pfam" id="PF00288">
    <property type="entry name" value="GHMP_kinases_N"/>
    <property type="match status" value="1"/>
</dbReference>
<dbReference type="PIRSF" id="PIRSF010376">
    <property type="entry name" value="IspE"/>
    <property type="match status" value="1"/>
</dbReference>
<dbReference type="SUPFAM" id="SSF55060">
    <property type="entry name" value="GHMP Kinase, C-terminal domain"/>
    <property type="match status" value="1"/>
</dbReference>
<dbReference type="SUPFAM" id="SSF54211">
    <property type="entry name" value="Ribosomal protein S5 domain 2-like"/>
    <property type="match status" value="1"/>
</dbReference>
<name>ISPE_VIBVY</name>
<keyword id="KW-0067">ATP-binding</keyword>
<keyword id="KW-0414">Isoprene biosynthesis</keyword>
<keyword id="KW-0418">Kinase</keyword>
<keyword id="KW-0547">Nucleotide-binding</keyword>
<keyword id="KW-0808">Transferase</keyword>
<organism>
    <name type="scientific">Vibrio vulnificus (strain YJ016)</name>
    <dbReference type="NCBI Taxonomy" id="196600"/>
    <lineage>
        <taxon>Bacteria</taxon>
        <taxon>Pseudomonadati</taxon>
        <taxon>Pseudomonadota</taxon>
        <taxon>Gammaproteobacteria</taxon>
        <taxon>Vibrionales</taxon>
        <taxon>Vibrionaceae</taxon>
        <taxon>Vibrio</taxon>
    </lineage>
</organism>
<feature type="chain" id="PRO_0000189288" description="4-diphosphocytidyl-2-C-methyl-D-erythritol kinase">
    <location>
        <begin position="1"/>
        <end position="295"/>
    </location>
</feature>
<feature type="active site" evidence="1">
    <location>
        <position position="18"/>
    </location>
</feature>
<feature type="active site" evidence="1">
    <location>
        <position position="143"/>
    </location>
</feature>
<feature type="binding site" evidence="1">
    <location>
        <begin position="101"/>
        <end position="111"/>
    </location>
    <ligand>
        <name>ATP</name>
        <dbReference type="ChEBI" id="CHEBI:30616"/>
    </ligand>
</feature>
<comment type="function">
    <text evidence="1">Catalyzes the phosphorylation of the position 2 hydroxy group of 4-diphosphocytidyl-2C-methyl-D-erythritol.</text>
</comment>
<comment type="catalytic activity">
    <reaction evidence="1">
        <text>4-CDP-2-C-methyl-D-erythritol + ATP = 4-CDP-2-C-methyl-D-erythritol 2-phosphate + ADP + H(+)</text>
        <dbReference type="Rhea" id="RHEA:18437"/>
        <dbReference type="ChEBI" id="CHEBI:15378"/>
        <dbReference type="ChEBI" id="CHEBI:30616"/>
        <dbReference type="ChEBI" id="CHEBI:57823"/>
        <dbReference type="ChEBI" id="CHEBI:57919"/>
        <dbReference type="ChEBI" id="CHEBI:456216"/>
        <dbReference type="EC" id="2.7.1.148"/>
    </reaction>
</comment>
<comment type="pathway">
    <text evidence="1">Isoprenoid biosynthesis; isopentenyl diphosphate biosynthesis via DXP pathway; isopentenyl diphosphate from 1-deoxy-D-xylulose 5-phosphate: step 3/6.</text>
</comment>
<comment type="similarity">
    <text evidence="1">Belongs to the GHMP kinase family. IspE subfamily.</text>
</comment>